<sequence length="778" mass="83654">MMNYRTSIYVVLSLVIFLNVQRSFVAESSAKRKVHIVYLGEKQHDDPEFVTESHHRMLWSLLGSKEDANDSMVYSYRHGFSGFAAKLTESQAKKIADLPDVVHVIPDSFYKLATTRTWDYLGLSAANPKSLLHETNMGEQIIIGVIDTGVWPESEVFNDSGFGPVPSHWKGGCETGENFNSSNCNKKLIGAKYFINGFLAENESFNSTNSLDFISPRDLDGHGTHVSTIAGGSFVPNISYKGLAGGTVRGGAPRAHIAMYKACWYLDDDDTTTCSSADILKAMDEAMHDGVDVLSISLGSSVPLYGETDIRDGITTGAFHAVLKGITVVCSGGNSGPDSLTVTNTAPWIITVAATTLDRSFATPLTLGNNKVILGQAMYTGPGLGFTSLVYPENPGNSNESFSGTCEELLFNSNRTMEGKVVLCFTTSPYGGAVLSAARYVKRAGGLGVIIARHPGYAIQPCLDDFPCVAVDWELGTDILLYTRSSGSPVVKIQPSKTLVGQPVGTKVATFSSRGPNSIAPAILKPDIAAPGVSILAATTNTTFSDQGFIMLSGTSMAAPAISGVAALLKALHRDWSPAAIRSAIVTTAWKTDPFGEQIFAEGSPPKLADPFDYGGGLVNPEKSANPGLVYDMGLEDYVLYMCSVGYNETSISQLIGKTTVCSNPKPSVLDFNLPSITIPNLKDEVTITRTVTNVGPLNSVYRVTVEPPLGFQVTVTPETLVFNSTTKKVYFKVKVSTTHKTNTGYYFGSLTWSDSLHNVTIPLSVRTQILQNYYDEN</sequence>
<protein>
    <recommendedName>
        <fullName evidence="7">Subtilisin-like protease SBT3.6</fullName>
        <ecNumber evidence="6">3.4.21.-</ecNumber>
    </recommendedName>
    <alternativeName>
        <fullName evidence="7">Subtilase subfamily 3 member 6</fullName>
        <shortName evidence="7">AtSBT3.6</shortName>
    </alternativeName>
</protein>
<comment type="subcellular location">
    <subcellularLocation>
        <location evidence="2">Secreted</location>
    </subcellularLocation>
</comment>
<comment type="alternative products">
    <event type="alternative splicing"/>
    <isoform>
        <id>Q8L7I2-1</id>
        <name>1</name>
        <sequence type="displayed"/>
    </isoform>
    <isoform>
        <id>Q8L7I2-2</id>
        <name>2</name>
        <sequence type="described" ref="VSP_058028"/>
    </isoform>
    <isoform>
        <id>Q8L7I2-3</id>
        <name>3</name>
        <sequence type="described" ref="VSP_058029"/>
    </isoform>
</comment>
<comment type="similarity">
    <text evidence="8">Belongs to the peptidase S8 family.</text>
</comment>
<comment type="sequence caution" evidence="8">
    <conflict type="erroneous gene model prediction">
        <sequence resource="EMBL-CDS" id="AAD03431"/>
    </conflict>
</comment>
<comment type="sequence caution" evidence="8">
    <conflict type="erroneous gene model prediction">
        <sequence resource="EMBL-CDS" id="CAB40021"/>
    </conflict>
</comment>
<comment type="sequence caution" evidence="8">
    <conflict type="erroneous gene model prediction">
        <sequence resource="EMBL-CDS" id="CAB78178"/>
    </conflict>
</comment>
<accession>Q8L7I2</accession>
<accession>A8MS13</accession>
<accession>F4JMC8</accession>
<accession>Q0WVJ9</accession>
<accession>Q9T0B5</accession>
<accession>Q9ZSB3</accession>
<proteinExistence type="evidence at transcript level"/>
<dbReference type="EC" id="3.4.21.-" evidence="6"/>
<dbReference type="EMBL" id="AF118222">
    <property type="protein sequence ID" value="AAD03431.1"/>
    <property type="status" value="ALT_SEQ"/>
    <property type="molecule type" value="Genomic_DNA"/>
</dbReference>
<dbReference type="EMBL" id="AL049523">
    <property type="protein sequence ID" value="CAB40021.1"/>
    <property type="status" value="ALT_SEQ"/>
    <property type="molecule type" value="Genomic_DNA"/>
</dbReference>
<dbReference type="EMBL" id="AL161517">
    <property type="protein sequence ID" value="CAB78178.1"/>
    <property type="status" value="ALT_SEQ"/>
    <property type="molecule type" value="Genomic_DNA"/>
</dbReference>
<dbReference type="EMBL" id="CP002687">
    <property type="protein sequence ID" value="AEE82896.1"/>
    <property type="molecule type" value="Genomic_DNA"/>
</dbReference>
<dbReference type="EMBL" id="CP002687">
    <property type="protein sequence ID" value="AEE82897.1"/>
    <property type="molecule type" value="Genomic_DNA"/>
</dbReference>
<dbReference type="EMBL" id="CP002687">
    <property type="protein sequence ID" value="AEE82898.1"/>
    <property type="molecule type" value="Genomic_DNA"/>
</dbReference>
<dbReference type="EMBL" id="CP002687">
    <property type="protein sequence ID" value="ANM66371.1"/>
    <property type="molecule type" value="Genomic_DNA"/>
</dbReference>
<dbReference type="EMBL" id="AY133682">
    <property type="protein sequence ID" value="AAM91616.1"/>
    <property type="molecule type" value="mRNA"/>
</dbReference>
<dbReference type="EMBL" id="AK226748">
    <property type="protein sequence ID" value="BAE98849.1"/>
    <property type="molecule type" value="mRNA"/>
</dbReference>
<dbReference type="PIR" id="T04190">
    <property type="entry name" value="T04190"/>
</dbReference>
<dbReference type="RefSeq" id="NP_001078370.1">
    <molecule id="Q8L7I2-2"/>
    <property type="nucleotide sequence ID" value="NM_001084901.3"/>
</dbReference>
<dbReference type="RefSeq" id="NP_001190697.1">
    <molecule id="Q8L7I2-3"/>
    <property type="nucleotide sequence ID" value="NM_001203768.1"/>
</dbReference>
<dbReference type="RefSeq" id="NP_001328268.1">
    <molecule id="Q8L7I2-2"/>
    <property type="nucleotide sequence ID" value="NM_001340675.1"/>
</dbReference>
<dbReference type="RefSeq" id="NP_567362.1">
    <molecule id="Q8L7I2-1"/>
    <property type="nucleotide sequence ID" value="NM_117123.3"/>
</dbReference>
<dbReference type="SMR" id="Q8L7I2"/>
<dbReference type="FunCoup" id="Q8L7I2">
    <property type="interactions" value="234"/>
</dbReference>
<dbReference type="MEROPS" id="S08.A43"/>
<dbReference type="GlyCosmos" id="Q8L7I2">
    <property type="glycosylation" value="12 sites, No reported glycans"/>
</dbReference>
<dbReference type="GlyGen" id="Q8L7I2">
    <property type="glycosylation" value="12 sites"/>
</dbReference>
<dbReference type="iPTMnet" id="Q8L7I2"/>
<dbReference type="PaxDb" id="3702-AT4G10550.3"/>
<dbReference type="ProteomicsDB" id="232846">
    <molecule id="Q8L7I2-1"/>
</dbReference>
<dbReference type="EnsemblPlants" id="AT4G10550.1">
    <molecule id="Q8L7I2-1"/>
    <property type="protein sequence ID" value="AT4G10550.1"/>
    <property type="gene ID" value="AT4G10550"/>
</dbReference>
<dbReference type="EnsemblPlants" id="AT4G10550.2">
    <molecule id="Q8L7I2-2"/>
    <property type="protein sequence ID" value="AT4G10550.2"/>
    <property type="gene ID" value="AT4G10550"/>
</dbReference>
<dbReference type="EnsemblPlants" id="AT4G10550.3">
    <molecule id="Q8L7I2-3"/>
    <property type="protein sequence ID" value="AT4G10550.3"/>
    <property type="gene ID" value="AT4G10550"/>
</dbReference>
<dbReference type="EnsemblPlants" id="AT4G10550.4">
    <molecule id="Q8L7I2-2"/>
    <property type="protein sequence ID" value="AT4G10550.4"/>
    <property type="gene ID" value="AT4G10550"/>
</dbReference>
<dbReference type="GeneID" id="826647"/>
<dbReference type="Gramene" id="AT4G10550.1">
    <molecule id="Q8L7I2-1"/>
    <property type="protein sequence ID" value="AT4G10550.1"/>
    <property type="gene ID" value="AT4G10550"/>
</dbReference>
<dbReference type="Gramene" id="AT4G10550.2">
    <molecule id="Q8L7I2-2"/>
    <property type="protein sequence ID" value="AT4G10550.2"/>
    <property type="gene ID" value="AT4G10550"/>
</dbReference>
<dbReference type="Gramene" id="AT4G10550.3">
    <molecule id="Q8L7I2-3"/>
    <property type="protein sequence ID" value="AT4G10550.3"/>
    <property type="gene ID" value="AT4G10550"/>
</dbReference>
<dbReference type="Gramene" id="AT4G10550.4">
    <molecule id="Q8L7I2-2"/>
    <property type="protein sequence ID" value="AT4G10550.4"/>
    <property type="gene ID" value="AT4G10550"/>
</dbReference>
<dbReference type="KEGG" id="ath:AT4G10550"/>
<dbReference type="Araport" id="AT4G10550"/>
<dbReference type="TAIR" id="AT4G10550"/>
<dbReference type="eggNOG" id="ENOG502QSF0">
    <property type="taxonomic scope" value="Eukaryota"/>
</dbReference>
<dbReference type="InParanoid" id="Q8L7I2"/>
<dbReference type="PhylomeDB" id="Q8L7I2"/>
<dbReference type="PRO" id="PR:Q8L7I2"/>
<dbReference type="Proteomes" id="UP000006548">
    <property type="component" value="Chromosome 4"/>
</dbReference>
<dbReference type="ExpressionAtlas" id="Q8L7I2">
    <property type="expression patterns" value="baseline and differential"/>
</dbReference>
<dbReference type="GO" id="GO:0005829">
    <property type="term" value="C:cytosol"/>
    <property type="evidence" value="ECO:0007005"/>
    <property type="project" value="TAIR"/>
</dbReference>
<dbReference type="GO" id="GO:0005576">
    <property type="term" value="C:extracellular region"/>
    <property type="evidence" value="ECO:0007669"/>
    <property type="project" value="UniProtKB-SubCell"/>
</dbReference>
<dbReference type="GO" id="GO:0004252">
    <property type="term" value="F:serine-type endopeptidase activity"/>
    <property type="evidence" value="ECO:0007669"/>
    <property type="project" value="InterPro"/>
</dbReference>
<dbReference type="GO" id="GO:0006508">
    <property type="term" value="P:proteolysis"/>
    <property type="evidence" value="ECO:0007669"/>
    <property type="project" value="UniProtKB-KW"/>
</dbReference>
<dbReference type="CDD" id="cd02120">
    <property type="entry name" value="PA_subtilisin_like"/>
    <property type="match status" value="1"/>
</dbReference>
<dbReference type="CDD" id="cd04852">
    <property type="entry name" value="Peptidases_S8_3"/>
    <property type="match status" value="1"/>
</dbReference>
<dbReference type="FunFam" id="2.60.40.2310:FF:000001">
    <property type="entry name" value="Subtilisin-like protease SBT1.5"/>
    <property type="match status" value="1"/>
</dbReference>
<dbReference type="FunFam" id="3.40.50.200:FF:000006">
    <property type="entry name" value="Subtilisin-like protease SBT1.5"/>
    <property type="match status" value="1"/>
</dbReference>
<dbReference type="FunFam" id="3.50.30.30:FF:000005">
    <property type="entry name" value="subtilisin-like protease SBT1.5"/>
    <property type="match status" value="1"/>
</dbReference>
<dbReference type="FunFam" id="3.30.70.80:FF:000002">
    <property type="entry name" value="Subtilisin-like protease SBT5.3"/>
    <property type="match status" value="1"/>
</dbReference>
<dbReference type="Gene3D" id="2.60.40.2310">
    <property type="match status" value="1"/>
</dbReference>
<dbReference type="Gene3D" id="3.50.30.30">
    <property type="match status" value="1"/>
</dbReference>
<dbReference type="Gene3D" id="3.30.70.80">
    <property type="entry name" value="Peptidase S8 propeptide/proteinase inhibitor I9"/>
    <property type="match status" value="1"/>
</dbReference>
<dbReference type="Gene3D" id="3.40.50.200">
    <property type="entry name" value="Peptidase S8/S53 domain"/>
    <property type="match status" value="1"/>
</dbReference>
<dbReference type="InterPro" id="IPR000209">
    <property type="entry name" value="Peptidase_S8/S53_dom"/>
</dbReference>
<dbReference type="InterPro" id="IPR036852">
    <property type="entry name" value="Peptidase_S8/S53_dom_sf"/>
</dbReference>
<dbReference type="InterPro" id="IPR023828">
    <property type="entry name" value="Peptidase_S8_Ser-AS"/>
</dbReference>
<dbReference type="InterPro" id="IPR015500">
    <property type="entry name" value="Peptidase_S8_subtilisin-rel"/>
</dbReference>
<dbReference type="InterPro" id="IPR034197">
    <property type="entry name" value="Peptidases_S8_3"/>
</dbReference>
<dbReference type="InterPro" id="IPR010259">
    <property type="entry name" value="S8pro/Inhibitor_I9"/>
</dbReference>
<dbReference type="InterPro" id="IPR037045">
    <property type="entry name" value="S8pro/Inhibitor_I9_sf"/>
</dbReference>
<dbReference type="InterPro" id="IPR045051">
    <property type="entry name" value="SBT"/>
</dbReference>
<dbReference type="InterPro" id="IPR041469">
    <property type="entry name" value="Subtilisin-like_FN3"/>
</dbReference>
<dbReference type="PANTHER" id="PTHR10795">
    <property type="entry name" value="PROPROTEIN CONVERTASE SUBTILISIN/KEXIN"/>
    <property type="match status" value="1"/>
</dbReference>
<dbReference type="Pfam" id="PF17766">
    <property type="entry name" value="fn3_6"/>
    <property type="match status" value="1"/>
</dbReference>
<dbReference type="Pfam" id="PF05922">
    <property type="entry name" value="Inhibitor_I9"/>
    <property type="match status" value="1"/>
</dbReference>
<dbReference type="Pfam" id="PF00082">
    <property type="entry name" value="Peptidase_S8"/>
    <property type="match status" value="1"/>
</dbReference>
<dbReference type="PRINTS" id="PR00723">
    <property type="entry name" value="SUBTILISIN"/>
</dbReference>
<dbReference type="SUPFAM" id="SSF52743">
    <property type="entry name" value="Subtilisin-like"/>
    <property type="match status" value="1"/>
</dbReference>
<dbReference type="PROSITE" id="PS51892">
    <property type="entry name" value="SUBTILASE"/>
    <property type="match status" value="1"/>
</dbReference>
<dbReference type="PROSITE" id="PS00138">
    <property type="entry name" value="SUBTILASE_SER"/>
    <property type="match status" value="1"/>
</dbReference>
<keyword id="KW-0025">Alternative splicing</keyword>
<keyword id="KW-0068">Autocatalytic cleavage</keyword>
<keyword id="KW-0325">Glycoprotein</keyword>
<keyword id="KW-0378">Hydrolase</keyword>
<keyword id="KW-0645">Protease</keyword>
<keyword id="KW-1185">Reference proteome</keyword>
<keyword id="KW-0964">Secreted</keyword>
<keyword id="KW-0720">Serine protease</keyword>
<keyword id="KW-0732">Signal</keyword>
<keyword id="KW-0865">Zymogen</keyword>
<reference key="1">
    <citation type="journal article" date="1999" name="Nature">
        <title>Sequence and analysis of chromosome 4 of the plant Arabidopsis thaliana.</title>
        <authorList>
            <person name="Mayer K.F.X."/>
            <person name="Schueller C."/>
            <person name="Wambutt R."/>
            <person name="Murphy G."/>
            <person name="Volckaert G."/>
            <person name="Pohl T."/>
            <person name="Duesterhoeft A."/>
            <person name="Stiekema W."/>
            <person name="Entian K.-D."/>
            <person name="Terryn N."/>
            <person name="Harris B."/>
            <person name="Ansorge W."/>
            <person name="Brandt P."/>
            <person name="Grivell L.A."/>
            <person name="Rieger M."/>
            <person name="Weichselgartner M."/>
            <person name="de Simone V."/>
            <person name="Obermaier B."/>
            <person name="Mache R."/>
            <person name="Mueller M."/>
            <person name="Kreis M."/>
            <person name="Delseny M."/>
            <person name="Puigdomenech P."/>
            <person name="Watson M."/>
            <person name="Schmidtheini T."/>
            <person name="Reichert B."/>
            <person name="Portetelle D."/>
            <person name="Perez-Alonso M."/>
            <person name="Boutry M."/>
            <person name="Bancroft I."/>
            <person name="Vos P."/>
            <person name="Hoheisel J."/>
            <person name="Zimmermann W."/>
            <person name="Wedler H."/>
            <person name="Ridley P."/>
            <person name="Langham S.-A."/>
            <person name="McCullagh B."/>
            <person name="Bilham L."/>
            <person name="Robben J."/>
            <person name="van der Schueren J."/>
            <person name="Grymonprez B."/>
            <person name="Chuang Y.-J."/>
            <person name="Vandenbussche F."/>
            <person name="Braeken M."/>
            <person name="Weltjens I."/>
            <person name="Voet M."/>
            <person name="Bastiaens I."/>
            <person name="Aert R."/>
            <person name="Defoor E."/>
            <person name="Weitzenegger T."/>
            <person name="Bothe G."/>
            <person name="Ramsperger U."/>
            <person name="Hilbert H."/>
            <person name="Braun M."/>
            <person name="Holzer E."/>
            <person name="Brandt A."/>
            <person name="Peters S."/>
            <person name="van Staveren M."/>
            <person name="Dirkse W."/>
            <person name="Mooijman P."/>
            <person name="Klein Lankhorst R."/>
            <person name="Rose M."/>
            <person name="Hauf J."/>
            <person name="Koetter P."/>
            <person name="Berneiser S."/>
            <person name="Hempel S."/>
            <person name="Feldpausch M."/>
            <person name="Lamberth S."/>
            <person name="Van den Daele H."/>
            <person name="De Keyser A."/>
            <person name="Buysshaert C."/>
            <person name="Gielen J."/>
            <person name="Villarroel R."/>
            <person name="De Clercq R."/>
            <person name="van Montagu M."/>
            <person name="Rogers J."/>
            <person name="Cronin A."/>
            <person name="Quail M.A."/>
            <person name="Bray-Allen S."/>
            <person name="Clark L."/>
            <person name="Doggett J."/>
            <person name="Hall S."/>
            <person name="Kay M."/>
            <person name="Lennard N."/>
            <person name="McLay K."/>
            <person name="Mayes R."/>
            <person name="Pettett A."/>
            <person name="Rajandream M.A."/>
            <person name="Lyne M."/>
            <person name="Benes V."/>
            <person name="Rechmann S."/>
            <person name="Borkova D."/>
            <person name="Bloecker H."/>
            <person name="Scharfe M."/>
            <person name="Grimm M."/>
            <person name="Loehnert T.-H."/>
            <person name="Dose S."/>
            <person name="de Haan M."/>
            <person name="Maarse A.C."/>
            <person name="Schaefer M."/>
            <person name="Mueller-Auer S."/>
            <person name="Gabel C."/>
            <person name="Fuchs M."/>
            <person name="Fartmann B."/>
            <person name="Granderath K."/>
            <person name="Dauner D."/>
            <person name="Herzl A."/>
            <person name="Neumann S."/>
            <person name="Argiriou A."/>
            <person name="Vitale D."/>
            <person name="Liguori R."/>
            <person name="Piravandi E."/>
            <person name="Massenet O."/>
            <person name="Quigley F."/>
            <person name="Clabauld G."/>
            <person name="Muendlein A."/>
            <person name="Felber R."/>
            <person name="Schnabl S."/>
            <person name="Hiller R."/>
            <person name="Schmidt W."/>
            <person name="Lecharny A."/>
            <person name="Aubourg S."/>
            <person name="Chefdor F."/>
            <person name="Cooke R."/>
            <person name="Berger C."/>
            <person name="Monfort A."/>
            <person name="Casacuberta E."/>
            <person name="Gibbons T."/>
            <person name="Weber N."/>
            <person name="Vandenbol M."/>
            <person name="Bargues M."/>
            <person name="Terol J."/>
            <person name="Torres A."/>
            <person name="Perez-Perez A."/>
            <person name="Purnelle B."/>
            <person name="Bent E."/>
            <person name="Johnson S."/>
            <person name="Tacon D."/>
            <person name="Jesse T."/>
            <person name="Heijnen L."/>
            <person name="Schwarz S."/>
            <person name="Scholler P."/>
            <person name="Heber S."/>
            <person name="Francs P."/>
            <person name="Bielke C."/>
            <person name="Frishman D."/>
            <person name="Haase D."/>
            <person name="Lemcke K."/>
            <person name="Mewes H.-W."/>
            <person name="Stocker S."/>
            <person name="Zaccaria P."/>
            <person name="Bevan M."/>
            <person name="Wilson R.K."/>
            <person name="de la Bastide M."/>
            <person name="Habermann K."/>
            <person name="Parnell L."/>
            <person name="Dedhia N."/>
            <person name="Gnoj L."/>
            <person name="Schutz K."/>
            <person name="Huang E."/>
            <person name="Spiegel L."/>
            <person name="Sekhon M."/>
            <person name="Murray J."/>
            <person name="Sheet P."/>
            <person name="Cordes M."/>
            <person name="Abu-Threideh J."/>
            <person name="Stoneking T."/>
            <person name="Kalicki J."/>
            <person name="Graves T."/>
            <person name="Harmon G."/>
            <person name="Edwards J."/>
            <person name="Latreille P."/>
            <person name="Courtney L."/>
            <person name="Cloud J."/>
            <person name="Abbott A."/>
            <person name="Scott K."/>
            <person name="Johnson D."/>
            <person name="Minx P."/>
            <person name="Bentley D."/>
            <person name="Fulton B."/>
            <person name="Miller N."/>
            <person name="Greco T."/>
            <person name="Kemp K."/>
            <person name="Kramer J."/>
            <person name="Fulton L."/>
            <person name="Mardis E."/>
            <person name="Dante M."/>
            <person name="Pepin K."/>
            <person name="Hillier L.W."/>
            <person name="Nelson J."/>
            <person name="Spieth J."/>
            <person name="Ryan E."/>
            <person name="Andrews S."/>
            <person name="Geisel C."/>
            <person name="Layman D."/>
            <person name="Du H."/>
            <person name="Ali J."/>
            <person name="Berghoff A."/>
            <person name="Jones K."/>
            <person name="Drone K."/>
            <person name="Cotton M."/>
            <person name="Joshu C."/>
            <person name="Antonoiu B."/>
            <person name="Zidanic M."/>
            <person name="Strong C."/>
            <person name="Sun H."/>
            <person name="Lamar B."/>
            <person name="Yordan C."/>
            <person name="Ma P."/>
            <person name="Zhong J."/>
            <person name="Preston R."/>
            <person name="Vil D."/>
            <person name="Shekher M."/>
            <person name="Matero A."/>
            <person name="Shah R."/>
            <person name="Swaby I.K."/>
            <person name="O'Shaughnessy A."/>
            <person name="Rodriguez M."/>
            <person name="Hoffman J."/>
            <person name="Till S."/>
            <person name="Granat S."/>
            <person name="Shohdy N."/>
            <person name="Hasegawa A."/>
            <person name="Hameed A."/>
            <person name="Lodhi M."/>
            <person name="Johnson A."/>
            <person name="Chen E."/>
            <person name="Marra M.A."/>
            <person name="Martienssen R."/>
            <person name="McCombie W.R."/>
        </authorList>
    </citation>
    <scope>NUCLEOTIDE SEQUENCE [LARGE SCALE GENOMIC DNA]</scope>
    <source>
        <strain>cv. Columbia</strain>
    </source>
</reference>
<reference key="2">
    <citation type="journal article" date="2017" name="Plant J.">
        <title>Araport11: a complete reannotation of the Arabidopsis thaliana reference genome.</title>
        <authorList>
            <person name="Cheng C.Y."/>
            <person name="Krishnakumar V."/>
            <person name="Chan A.P."/>
            <person name="Thibaud-Nissen F."/>
            <person name="Schobel S."/>
            <person name="Town C.D."/>
        </authorList>
    </citation>
    <scope>GENOME REANNOTATION</scope>
    <source>
        <strain>cv. Columbia</strain>
    </source>
</reference>
<reference key="3">
    <citation type="journal article" date="2003" name="Science">
        <title>Empirical analysis of transcriptional activity in the Arabidopsis genome.</title>
        <authorList>
            <person name="Yamada K."/>
            <person name="Lim J."/>
            <person name="Dale J.M."/>
            <person name="Chen H."/>
            <person name="Shinn P."/>
            <person name="Palm C.J."/>
            <person name="Southwick A.M."/>
            <person name="Wu H.C."/>
            <person name="Kim C.J."/>
            <person name="Nguyen M."/>
            <person name="Pham P.K."/>
            <person name="Cheuk R.F."/>
            <person name="Karlin-Newmann G."/>
            <person name="Liu S.X."/>
            <person name="Lam B."/>
            <person name="Sakano H."/>
            <person name="Wu T."/>
            <person name="Yu G."/>
            <person name="Miranda M."/>
            <person name="Quach H.L."/>
            <person name="Tripp M."/>
            <person name="Chang C.H."/>
            <person name="Lee J.M."/>
            <person name="Toriumi M.J."/>
            <person name="Chan M.M."/>
            <person name="Tang C.C."/>
            <person name="Onodera C.S."/>
            <person name="Deng J.M."/>
            <person name="Akiyama K."/>
            <person name="Ansari Y."/>
            <person name="Arakawa T."/>
            <person name="Banh J."/>
            <person name="Banno F."/>
            <person name="Bowser L."/>
            <person name="Brooks S.Y."/>
            <person name="Carninci P."/>
            <person name="Chao Q."/>
            <person name="Choy N."/>
            <person name="Enju A."/>
            <person name="Goldsmith A.D."/>
            <person name="Gurjal M."/>
            <person name="Hansen N.F."/>
            <person name="Hayashizaki Y."/>
            <person name="Johnson-Hopson C."/>
            <person name="Hsuan V.W."/>
            <person name="Iida K."/>
            <person name="Karnes M."/>
            <person name="Khan S."/>
            <person name="Koesema E."/>
            <person name="Ishida J."/>
            <person name="Jiang P.X."/>
            <person name="Jones T."/>
            <person name="Kawai J."/>
            <person name="Kamiya A."/>
            <person name="Meyers C."/>
            <person name="Nakajima M."/>
            <person name="Narusaka M."/>
            <person name="Seki M."/>
            <person name="Sakurai T."/>
            <person name="Satou M."/>
            <person name="Tamse R."/>
            <person name="Vaysberg M."/>
            <person name="Wallender E.K."/>
            <person name="Wong C."/>
            <person name="Yamamura Y."/>
            <person name="Yuan S."/>
            <person name="Shinozaki K."/>
            <person name="Davis R.W."/>
            <person name="Theologis A."/>
            <person name="Ecker J.R."/>
        </authorList>
    </citation>
    <scope>NUCLEOTIDE SEQUENCE [LARGE SCALE MRNA] (ISOFORM 1)</scope>
    <source>
        <strain>cv. Columbia</strain>
    </source>
</reference>
<reference key="4">
    <citation type="submission" date="2006-07" db="EMBL/GenBank/DDBJ databases">
        <title>Large-scale analysis of RIKEN Arabidopsis full-length (RAFL) cDNAs.</title>
        <authorList>
            <person name="Totoki Y."/>
            <person name="Seki M."/>
            <person name="Ishida J."/>
            <person name="Nakajima M."/>
            <person name="Enju A."/>
            <person name="Kamiya A."/>
            <person name="Narusaka M."/>
            <person name="Shin-i T."/>
            <person name="Nakagawa M."/>
            <person name="Sakamoto N."/>
            <person name="Oishi K."/>
            <person name="Kohara Y."/>
            <person name="Kobayashi M."/>
            <person name="Toyoda A."/>
            <person name="Sakaki Y."/>
            <person name="Sakurai T."/>
            <person name="Iida K."/>
            <person name="Akiyama K."/>
            <person name="Satou M."/>
            <person name="Toyoda T."/>
            <person name="Konagaya A."/>
            <person name="Carninci P."/>
            <person name="Kawai J."/>
            <person name="Hayashizaki Y."/>
            <person name="Shinozaki K."/>
        </authorList>
    </citation>
    <scope>NUCLEOTIDE SEQUENCE [LARGE SCALE MRNA] (ISOFORM 2)</scope>
    <source>
        <strain>cv. Columbia</strain>
    </source>
</reference>
<reference key="5">
    <citation type="journal article" date="2005" name="PLoS Comput. Biol.">
        <title>Inferring hypotheses on functional relationships of genes: Analysis of the Arabidopsis thaliana subtilase gene family.</title>
        <authorList>
            <person name="Rautengarten C."/>
            <person name="Steinhauser D."/>
            <person name="Bussis D."/>
            <person name="Stintzi A."/>
            <person name="Schaller A."/>
            <person name="Kopka J."/>
            <person name="Altmann T."/>
        </authorList>
    </citation>
    <scope>GENE FAMILY</scope>
    <scope>NOMENCLATURE</scope>
</reference>
<name>SBT36_ARATH</name>
<gene>
    <name evidence="7" type="primary">SBT3.6</name>
    <name evidence="9" type="ordered locus">At4g10550</name>
    <name evidence="10" type="ORF">F3H7.3</name>
    <name evidence="12" type="ORF">T4F9.10</name>
</gene>
<evidence type="ECO:0000250" key="1">
    <source>
        <dbReference type="UniProtKB" id="Q39547"/>
    </source>
</evidence>
<evidence type="ECO:0000250" key="2">
    <source>
        <dbReference type="UniProtKB" id="Q84WS0"/>
    </source>
</evidence>
<evidence type="ECO:0000255" key="3"/>
<evidence type="ECO:0000255" key="4">
    <source>
        <dbReference type="PROSITE-ProRule" id="PRU00498"/>
    </source>
</evidence>
<evidence type="ECO:0000255" key="5">
    <source>
        <dbReference type="PROSITE-ProRule" id="PRU01240"/>
    </source>
</evidence>
<evidence type="ECO:0000255" key="6">
    <source>
        <dbReference type="PROSITE-ProRule" id="PRU10082"/>
    </source>
</evidence>
<evidence type="ECO:0000303" key="7">
    <source>
    </source>
</evidence>
<evidence type="ECO:0000305" key="8"/>
<evidence type="ECO:0000312" key="9">
    <source>
        <dbReference type="Araport" id="AT4G10550"/>
    </source>
</evidence>
<evidence type="ECO:0000312" key="10">
    <source>
        <dbReference type="EMBL" id="AAD03431.1"/>
    </source>
</evidence>
<evidence type="ECO:0000312" key="11">
    <source>
        <dbReference type="EMBL" id="AAM91616.1"/>
    </source>
</evidence>
<evidence type="ECO:0000312" key="12">
    <source>
        <dbReference type="EMBL" id="CAB40021.1"/>
    </source>
</evidence>
<feature type="signal peptide" evidence="3">
    <location>
        <begin position="1"/>
        <end position="22"/>
    </location>
</feature>
<feature type="propeptide" id="PRO_0000435195" description="Activation peptide" evidence="1">
    <location>
        <begin position="23"/>
        <end position="113"/>
    </location>
</feature>
<feature type="chain" id="PRO_5004309532" description="Subtilisin-like protease SBT3.6">
    <location>
        <begin position="114"/>
        <end status="unknown"/>
    </location>
</feature>
<feature type="propeptide" id="PRO_0000435196" evidence="1">
    <location>
        <begin status="unknown"/>
        <end position="778"/>
    </location>
</feature>
<feature type="domain" description="Inhibitor I9" evidence="3">
    <location>
        <begin position="34"/>
        <end position="113"/>
    </location>
</feature>
<feature type="domain" description="Peptidase S8" evidence="5">
    <location>
        <begin position="117"/>
        <end position="625"/>
    </location>
</feature>
<feature type="domain" description="PA" evidence="3">
    <location>
        <begin position="388"/>
        <end position="483"/>
    </location>
</feature>
<feature type="active site" description="Charge relay system" evidence="5">
    <location>
        <position position="147"/>
    </location>
</feature>
<feature type="active site" description="Charge relay system" evidence="5">
    <location>
        <position position="222"/>
    </location>
</feature>
<feature type="active site" description="Charge relay system" evidence="5">
    <location>
        <position position="556"/>
    </location>
</feature>
<feature type="glycosylation site" description="N-linked (GlcNAc...) asparagine" evidence="4">
    <location>
        <position position="69"/>
    </location>
</feature>
<feature type="glycosylation site" description="N-linked (GlcNAc...) asparagine" evidence="4">
    <location>
        <position position="158"/>
    </location>
</feature>
<feature type="glycosylation site" description="N-linked (GlcNAc...) asparagine" evidence="4">
    <location>
        <position position="180"/>
    </location>
</feature>
<feature type="glycosylation site" description="N-linked (GlcNAc...) asparagine" evidence="4">
    <location>
        <position position="202"/>
    </location>
</feature>
<feature type="glycosylation site" description="N-linked (GlcNAc...) asparagine" evidence="4">
    <location>
        <position position="206"/>
    </location>
</feature>
<feature type="glycosylation site" description="N-linked (GlcNAc...) asparagine" evidence="4">
    <location>
        <position position="237"/>
    </location>
</feature>
<feature type="glycosylation site" description="N-linked (GlcNAc...) asparagine" evidence="4">
    <location>
        <position position="399"/>
    </location>
</feature>
<feature type="glycosylation site" description="N-linked (GlcNAc...) asparagine" evidence="4">
    <location>
        <position position="414"/>
    </location>
</feature>
<feature type="glycosylation site" description="N-linked (GlcNAc...) asparagine" evidence="4">
    <location>
        <position position="541"/>
    </location>
</feature>
<feature type="glycosylation site" description="N-linked (GlcNAc...) asparagine" evidence="4">
    <location>
        <position position="648"/>
    </location>
</feature>
<feature type="glycosylation site" description="N-linked (GlcNAc...) asparagine" evidence="4">
    <location>
        <position position="724"/>
    </location>
</feature>
<feature type="glycosylation site" description="N-linked (GlcNAc...) asparagine" evidence="4">
    <location>
        <position position="759"/>
    </location>
</feature>
<feature type="splice variant" id="VSP_058028" description="In isoform 2.">
    <location>
        <begin position="1"/>
        <end position="56"/>
    </location>
</feature>
<feature type="splice variant" id="VSP_058029" description="In isoform 3.">
    <original>MMNYRTSIYVVLSLVIFLNVQ</original>
    <variation>MKLRLQNPISPALKFTGHLPPSKALKSSKETIFLTKE</variation>
    <location>
        <begin position="1"/>
        <end position="21"/>
    </location>
</feature>
<feature type="sequence conflict" description="In Ref. 4; BAE98849." evidence="8" ref="4">
    <original>S</original>
    <variation>G</variation>
    <location>
        <position position="108"/>
    </location>
</feature>
<organism evidence="11">
    <name type="scientific">Arabidopsis thaliana</name>
    <name type="common">Mouse-ear cress</name>
    <dbReference type="NCBI Taxonomy" id="3702"/>
    <lineage>
        <taxon>Eukaryota</taxon>
        <taxon>Viridiplantae</taxon>
        <taxon>Streptophyta</taxon>
        <taxon>Embryophyta</taxon>
        <taxon>Tracheophyta</taxon>
        <taxon>Spermatophyta</taxon>
        <taxon>Magnoliopsida</taxon>
        <taxon>eudicotyledons</taxon>
        <taxon>Gunneridae</taxon>
        <taxon>Pentapetalae</taxon>
        <taxon>rosids</taxon>
        <taxon>malvids</taxon>
        <taxon>Brassicales</taxon>
        <taxon>Brassicaceae</taxon>
        <taxon>Camelineae</taxon>
        <taxon>Arabidopsis</taxon>
    </lineage>
</organism>